<organism>
    <name type="scientific">Mus musculus</name>
    <name type="common">Mouse</name>
    <dbReference type="NCBI Taxonomy" id="10090"/>
    <lineage>
        <taxon>Eukaryota</taxon>
        <taxon>Metazoa</taxon>
        <taxon>Chordata</taxon>
        <taxon>Craniata</taxon>
        <taxon>Vertebrata</taxon>
        <taxon>Euteleostomi</taxon>
        <taxon>Mammalia</taxon>
        <taxon>Eutheria</taxon>
        <taxon>Euarchontoglires</taxon>
        <taxon>Glires</taxon>
        <taxon>Rodentia</taxon>
        <taxon>Myomorpha</taxon>
        <taxon>Muroidea</taxon>
        <taxon>Muridae</taxon>
        <taxon>Murinae</taxon>
        <taxon>Mus</taxon>
        <taxon>Mus</taxon>
    </lineage>
</organism>
<sequence length="191" mass="21309">MQSIKCVVVGDGAVGKTCLLICYTTNAFPKEYIPTVFDNYSAQSAVDGRTVNLNLWDTAGQEEYDRLRTLSYPQTNVFVICFSIASPPSYENVRHKWHPEVCHHCPDVPILLVGTKKDLRAQPDTLRRLKEQGQAPITPQQGQALAKQIHAVRYLECSALQQDGVKEVFAEAVRAVLNPTPIKRGRSCILL</sequence>
<comment type="function">
    <text evidence="2">Plays a role in immunological synaptic F-actin density and architecture organization (By similarity). Regulates actin reorganization in lymphocytes, possibly through the modulation of Rac1 activity (By similarity). Required for the formation of membrane ruffles during macropinocytosis (By similarity). Plays a role in cell migration and is required for the formation of cup-like structures during trans-endothelial migration of leukocytes (By similarity). Binds phospholipids in an activation-dependent manner; thereby acting as an anchor for other proteins to the plasma membrane (PM) (By similarity). Plays a role in exocytosis of cytotoxic granules (CG) by lymphocytes/Component of the exocytosis machinery in natural killer (NK) and CD8+ T cells (By similarity). Promotes the docking of cytotoxic granules (CG) to the plasma membrane through the interaction with UNC13D (By similarity). Involved in the cytotoxic activity of lymphocytes/primary CD8+ T cells (By similarity).</text>
</comment>
<comment type="subunit">
    <text evidence="2">Interacts with ARHGEF26 (By similarity). Interacts with ARHGEF16 (By similarity). Interacts with UNC13D; the interaction increases RhoG affinity to the membrane lipids, targets UNC13D to membrane lipids and facilitates cytotoxic granule (CG) docking to the plasma membrane (By similarity).</text>
</comment>
<comment type="subcellular location">
    <subcellularLocation>
        <location evidence="4">Cell membrane</location>
        <topology evidence="4">Lipid-anchor</topology>
        <orientation evidence="4">Cytoplasmic side</orientation>
    </subcellularLocation>
</comment>
<comment type="similarity">
    <text evidence="4">Belongs to the small GTPase superfamily. Rho family.</text>
</comment>
<name>RHOG_MOUSE</name>
<reference key="1">
    <citation type="submission" date="1999-04" db="EMBL/GenBank/DDBJ databases">
        <title>Mouse homolog of GTP-binding protein rhoG.</title>
        <authorList>
            <person name="Seki N."/>
            <person name="Hattori A."/>
            <person name="Hayashi A."/>
            <person name="Kozuma S."/>
            <person name="Muramatsu M."/>
            <person name="Saito T."/>
        </authorList>
    </citation>
    <scope>NUCLEOTIDE SEQUENCE [MRNA]</scope>
</reference>
<reference key="2">
    <citation type="journal article" date="2004" name="Genome Res.">
        <title>The status, quality, and expansion of the NIH full-length cDNA project: the Mammalian Gene Collection (MGC).</title>
        <authorList>
            <consortium name="The MGC Project Team"/>
        </authorList>
    </citation>
    <scope>NUCLEOTIDE SEQUENCE [LARGE SCALE MRNA]</scope>
    <source>
        <strain>FVB/N-3</strain>
        <tissue>Mammary gland</tissue>
    </source>
</reference>
<reference key="3">
    <citation type="journal article" date="2010" name="Cell">
        <title>A tissue-specific atlas of mouse protein phosphorylation and expression.</title>
        <authorList>
            <person name="Huttlin E.L."/>
            <person name="Jedrychowski M.P."/>
            <person name="Elias J.E."/>
            <person name="Goswami T."/>
            <person name="Rad R."/>
            <person name="Beausoleil S.A."/>
            <person name="Villen J."/>
            <person name="Haas W."/>
            <person name="Sowa M.E."/>
            <person name="Gygi S.P."/>
        </authorList>
    </citation>
    <scope>IDENTIFICATION BY MASS SPECTROMETRY [LARGE SCALE ANALYSIS]</scope>
    <source>
        <tissue>Brain</tissue>
        <tissue>Brown adipose tissue</tissue>
        <tissue>Heart</tissue>
        <tissue>Kidney</tissue>
        <tissue>Liver</tissue>
        <tissue>Lung</tissue>
        <tissue>Pancreas</tissue>
        <tissue>Spleen</tissue>
        <tissue>Testis</tissue>
    </source>
</reference>
<proteinExistence type="evidence at protein level"/>
<accession>P84096</accession>
<accession>P35238</accession>
<accession>Q8NI04</accession>
<dbReference type="EMBL" id="AB025943">
    <property type="protein sequence ID" value="BAA84696.1"/>
    <property type="molecule type" value="mRNA"/>
</dbReference>
<dbReference type="EMBL" id="BC059775">
    <property type="protein sequence ID" value="AAH59775.1"/>
    <property type="molecule type" value="mRNA"/>
</dbReference>
<dbReference type="CCDS" id="CCDS21529.1"/>
<dbReference type="RefSeq" id="NP_062512.1">
    <property type="nucleotide sequence ID" value="NM_019566.3"/>
</dbReference>
<dbReference type="SMR" id="P84096"/>
<dbReference type="BioGRID" id="207846">
    <property type="interactions" value="6"/>
</dbReference>
<dbReference type="CORUM" id="P84096"/>
<dbReference type="FunCoup" id="P84096">
    <property type="interactions" value="1230"/>
</dbReference>
<dbReference type="IntAct" id="P84096">
    <property type="interactions" value="2"/>
</dbReference>
<dbReference type="MINT" id="P84096"/>
<dbReference type="STRING" id="10090.ENSMUSP00000102536"/>
<dbReference type="ChEMBL" id="CHEMBL4523268"/>
<dbReference type="GlyGen" id="P84096">
    <property type="glycosylation" value="1 site"/>
</dbReference>
<dbReference type="iPTMnet" id="P84096"/>
<dbReference type="PhosphoSitePlus" id="P84096"/>
<dbReference type="SwissPalm" id="P84096"/>
<dbReference type="jPOST" id="P84096"/>
<dbReference type="PaxDb" id="10090-ENSMUSP00000095832"/>
<dbReference type="PeptideAtlas" id="P84096"/>
<dbReference type="ProteomicsDB" id="255336"/>
<dbReference type="Pumba" id="P84096"/>
<dbReference type="Antibodypedia" id="23440">
    <property type="antibodies" value="208 antibodies from 35 providers"/>
</dbReference>
<dbReference type="DNASU" id="56212"/>
<dbReference type="Ensembl" id="ENSMUST00000098230.11">
    <property type="protein sequence ID" value="ENSMUSP00000095832.5"/>
    <property type="gene ID" value="ENSMUSG00000073982.12"/>
</dbReference>
<dbReference type="Ensembl" id="ENSMUST00000106923.2">
    <property type="protein sequence ID" value="ENSMUSP00000102536.2"/>
    <property type="gene ID" value="ENSMUSG00000073982.12"/>
</dbReference>
<dbReference type="GeneID" id="56212"/>
<dbReference type="KEGG" id="mmu:56212"/>
<dbReference type="UCSC" id="uc009irk.1">
    <property type="organism name" value="mouse"/>
</dbReference>
<dbReference type="AGR" id="MGI:1928370"/>
<dbReference type="CTD" id="391"/>
<dbReference type="MGI" id="MGI:1928370">
    <property type="gene designation" value="Rhog"/>
</dbReference>
<dbReference type="VEuPathDB" id="HostDB:ENSMUSG00000073982"/>
<dbReference type="eggNOG" id="KOG0393">
    <property type="taxonomic scope" value="Eukaryota"/>
</dbReference>
<dbReference type="GeneTree" id="ENSGT00940000155158"/>
<dbReference type="HOGENOM" id="CLU_041217_21_3_1"/>
<dbReference type="InParanoid" id="P84096"/>
<dbReference type="OMA" id="DNVASKW"/>
<dbReference type="OrthoDB" id="8830751at2759"/>
<dbReference type="PhylomeDB" id="P84096"/>
<dbReference type="TreeFam" id="TF101109"/>
<dbReference type="Reactome" id="R-MMU-114604">
    <property type="pathway name" value="GPVI-mediated activation cascade"/>
</dbReference>
<dbReference type="Reactome" id="R-MMU-1257604">
    <property type="pathway name" value="PIP3 activates AKT signaling"/>
</dbReference>
<dbReference type="Reactome" id="R-MMU-5625970">
    <property type="pathway name" value="RHO GTPases activate KTN1"/>
</dbReference>
<dbReference type="Reactome" id="R-MMU-6798695">
    <property type="pathway name" value="Neutrophil degranulation"/>
</dbReference>
<dbReference type="Reactome" id="R-MMU-6811558">
    <property type="pathway name" value="PI5P, PP2A and IER3 Regulate PI3K/AKT Signaling"/>
</dbReference>
<dbReference type="Reactome" id="R-MMU-9013408">
    <property type="pathway name" value="RHOG GTPase cycle"/>
</dbReference>
<dbReference type="BioGRID-ORCS" id="56212">
    <property type="hits" value="4 hits in 76 CRISPR screens"/>
</dbReference>
<dbReference type="CD-CODE" id="CE726F99">
    <property type="entry name" value="Postsynaptic density"/>
</dbReference>
<dbReference type="PRO" id="PR:P84096"/>
<dbReference type="Proteomes" id="UP000000589">
    <property type="component" value="Chromosome 7"/>
</dbReference>
<dbReference type="RNAct" id="P84096">
    <property type="molecule type" value="protein"/>
</dbReference>
<dbReference type="Bgee" id="ENSMUSG00000073982">
    <property type="expression patterns" value="Expressed in granulocyte and 239 other cell types or tissues"/>
</dbReference>
<dbReference type="ExpressionAtlas" id="P84096">
    <property type="expression patterns" value="baseline and differential"/>
</dbReference>
<dbReference type="GO" id="GO:0098978">
    <property type="term" value="C:glutamatergic synapse"/>
    <property type="evidence" value="ECO:0007669"/>
    <property type="project" value="Ensembl"/>
</dbReference>
<dbReference type="GO" id="GO:0005886">
    <property type="term" value="C:plasma membrane"/>
    <property type="evidence" value="ECO:0007669"/>
    <property type="project" value="UniProtKB-SubCell"/>
</dbReference>
<dbReference type="GO" id="GO:0098794">
    <property type="term" value="C:postsynapse"/>
    <property type="evidence" value="ECO:0007669"/>
    <property type="project" value="Ensembl"/>
</dbReference>
<dbReference type="GO" id="GO:0005525">
    <property type="term" value="F:GTP binding"/>
    <property type="evidence" value="ECO:0007669"/>
    <property type="project" value="UniProtKB-KW"/>
</dbReference>
<dbReference type="GO" id="GO:0003924">
    <property type="term" value="F:GTPase activity"/>
    <property type="evidence" value="ECO:0000266"/>
    <property type="project" value="MGI"/>
</dbReference>
<dbReference type="GO" id="GO:0030036">
    <property type="term" value="P:actin cytoskeleton organization"/>
    <property type="evidence" value="ECO:0000266"/>
    <property type="project" value="MGI"/>
</dbReference>
<dbReference type="GO" id="GO:0090630">
    <property type="term" value="P:activation of GTPase activity"/>
    <property type="evidence" value="ECO:0000250"/>
    <property type="project" value="UniProtKB"/>
</dbReference>
<dbReference type="GO" id="GO:0060326">
    <property type="term" value="P:cell chemotaxis"/>
    <property type="evidence" value="ECO:0000250"/>
    <property type="project" value="UniProtKB"/>
</dbReference>
<dbReference type="GO" id="GO:0045893">
    <property type="term" value="P:positive regulation of DNA-templated transcription"/>
    <property type="evidence" value="ECO:0000266"/>
    <property type="project" value="MGI"/>
</dbReference>
<dbReference type="GO" id="GO:1903078">
    <property type="term" value="P:positive regulation of protein localization to plasma membrane"/>
    <property type="evidence" value="ECO:0000250"/>
    <property type="project" value="UniProtKB"/>
</dbReference>
<dbReference type="GO" id="GO:0016601">
    <property type="term" value="P:Rac protein signal transduction"/>
    <property type="evidence" value="ECO:0000266"/>
    <property type="project" value="MGI"/>
</dbReference>
<dbReference type="GO" id="GO:0150052">
    <property type="term" value="P:regulation of postsynapse assembly"/>
    <property type="evidence" value="ECO:0007669"/>
    <property type="project" value="Ensembl"/>
</dbReference>
<dbReference type="GO" id="GO:1900027">
    <property type="term" value="P:regulation of ruffle assembly"/>
    <property type="evidence" value="ECO:0000314"/>
    <property type="project" value="MGI"/>
</dbReference>
<dbReference type="GO" id="GO:0007266">
    <property type="term" value="P:Rho protein signal transduction"/>
    <property type="evidence" value="ECO:0000266"/>
    <property type="project" value="MGI"/>
</dbReference>
<dbReference type="CDD" id="cd01875">
    <property type="entry name" value="RhoG"/>
    <property type="match status" value="1"/>
</dbReference>
<dbReference type="FunFam" id="3.40.50.300:FF:000118">
    <property type="entry name" value="Rho-related GTP-binding protein RhoG"/>
    <property type="match status" value="1"/>
</dbReference>
<dbReference type="Gene3D" id="3.40.50.300">
    <property type="entry name" value="P-loop containing nucleotide triphosphate hydrolases"/>
    <property type="match status" value="1"/>
</dbReference>
<dbReference type="InterPro" id="IPR027417">
    <property type="entry name" value="P-loop_NTPase"/>
</dbReference>
<dbReference type="InterPro" id="IPR042734">
    <property type="entry name" value="RhoG"/>
</dbReference>
<dbReference type="InterPro" id="IPR005225">
    <property type="entry name" value="Small_GTP-bd"/>
</dbReference>
<dbReference type="InterPro" id="IPR001806">
    <property type="entry name" value="Small_GTPase"/>
</dbReference>
<dbReference type="InterPro" id="IPR003578">
    <property type="entry name" value="Small_GTPase_Rho"/>
</dbReference>
<dbReference type="NCBIfam" id="TIGR00231">
    <property type="entry name" value="small_GTP"/>
    <property type="match status" value="1"/>
</dbReference>
<dbReference type="PANTHER" id="PTHR24072">
    <property type="entry name" value="RHO FAMILY GTPASE"/>
    <property type="match status" value="1"/>
</dbReference>
<dbReference type="Pfam" id="PF00071">
    <property type="entry name" value="Ras"/>
    <property type="match status" value="1"/>
</dbReference>
<dbReference type="PRINTS" id="PR00449">
    <property type="entry name" value="RASTRNSFRMNG"/>
</dbReference>
<dbReference type="SMART" id="SM00175">
    <property type="entry name" value="RAB"/>
    <property type="match status" value="1"/>
</dbReference>
<dbReference type="SMART" id="SM00176">
    <property type="entry name" value="RAN"/>
    <property type="match status" value="1"/>
</dbReference>
<dbReference type="SMART" id="SM00173">
    <property type="entry name" value="RAS"/>
    <property type="match status" value="1"/>
</dbReference>
<dbReference type="SMART" id="SM00174">
    <property type="entry name" value="RHO"/>
    <property type="match status" value="1"/>
</dbReference>
<dbReference type="SUPFAM" id="SSF52540">
    <property type="entry name" value="P-loop containing nucleoside triphosphate hydrolases"/>
    <property type="match status" value="1"/>
</dbReference>
<dbReference type="PROSITE" id="PS51420">
    <property type="entry name" value="RHO"/>
    <property type="match status" value="1"/>
</dbReference>
<feature type="chain" id="PRO_0000042030" description="Rho-related GTP-binding protein RhoG">
    <location>
        <begin position="1"/>
        <end position="188"/>
    </location>
</feature>
<feature type="propeptide" id="PRO_0000042031" description="Removed in mature form" evidence="1">
    <location>
        <begin position="189"/>
        <end position="191"/>
    </location>
</feature>
<feature type="short sequence motif" description="Effector region" evidence="3">
    <location>
        <begin position="32"/>
        <end position="40"/>
    </location>
</feature>
<feature type="binding site" evidence="1">
    <location>
        <begin position="10"/>
        <end position="17"/>
    </location>
    <ligand>
        <name>GTP</name>
        <dbReference type="ChEBI" id="CHEBI:37565"/>
    </ligand>
</feature>
<feature type="binding site" evidence="1">
    <location>
        <begin position="57"/>
        <end position="61"/>
    </location>
    <ligand>
        <name>GTP</name>
        <dbReference type="ChEBI" id="CHEBI:37565"/>
    </ligand>
</feature>
<feature type="binding site" evidence="1">
    <location>
        <begin position="115"/>
        <end position="118"/>
    </location>
    <ligand>
        <name>GTP</name>
        <dbReference type="ChEBI" id="CHEBI:37565"/>
    </ligand>
</feature>
<feature type="modified residue" description="Phosphothreonine" evidence="2">
    <location>
        <position position="138"/>
    </location>
</feature>
<feature type="modified residue" description="Phosphothreonine" evidence="2">
    <location>
        <position position="180"/>
    </location>
</feature>
<feature type="modified residue" description="Cysteine methyl ester" evidence="1">
    <location>
        <position position="188"/>
    </location>
</feature>
<feature type="lipid moiety-binding region" description="S-geranylgeranyl cysteine" evidence="1">
    <location>
        <position position="188"/>
    </location>
</feature>
<gene>
    <name type="primary">Rhog</name>
    <name type="synonym">Arhg</name>
    <name type="synonym">Sid10750</name>
</gene>
<evidence type="ECO:0000250" key="1"/>
<evidence type="ECO:0000250" key="2">
    <source>
        <dbReference type="UniProtKB" id="P84095"/>
    </source>
</evidence>
<evidence type="ECO:0000255" key="3"/>
<evidence type="ECO:0000305" key="4"/>
<protein>
    <recommendedName>
        <fullName>Rho-related GTP-binding protein RhoG</fullName>
    </recommendedName>
    <alternativeName>
        <fullName>Sid 10750</fullName>
    </alternativeName>
</protein>
<keyword id="KW-1003">Cell membrane</keyword>
<keyword id="KW-0342">GTP-binding</keyword>
<keyword id="KW-0449">Lipoprotein</keyword>
<keyword id="KW-0472">Membrane</keyword>
<keyword id="KW-0488">Methylation</keyword>
<keyword id="KW-0547">Nucleotide-binding</keyword>
<keyword id="KW-0597">Phosphoprotein</keyword>
<keyword id="KW-0636">Prenylation</keyword>
<keyword id="KW-1185">Reference proteome</keyword>